<accession>Q3SIM2</accession>
<proteinExistence type="inferred from homology"/>
<reference key="1">
    <citation type="journal article" date="2006" name="J. Bacteriol.">
        <title>The genome sequence of the obligately chemolithoautotrophic, facultatively anaerobic bacterium Thiobacillus denitrificans.</title>
        <authorList>
            <person name="Beller H.R."/>
            <person name="Chain P.S."/>
            <person name="Letain T.E."/>
            <person name="Chakicherla A."/>
            <person name="Larimer F.W."/>
            <person name="Richardson P.M."/>
            <person name="Coleman M.A."/>
            <person name="Wood A.P."/>
            <person name="Kelly D.P."/>
        </authorList>
    </citation>
    <scope>NUCLEOTIDE SEQUENCE [LARGE SCALE GENOMIC DNA]</scope>
    <source>
        <strain>ATCC 25259 / T1</strain>
    </source>
</reference>
<protein>
    <recommendedName>
        <fullName evidence="1">Large ribosomal subunit protein bL32</fullName>
    </recommendedName>
    <alternativeName>
        <fullName evidence="3">50S ribosomal protein L32</fullName>
    </alternativeName>
</protein>
<dbReference type="EMBL" id="CP000116">
    <property type="protein sequence ID" value="AAZ97506.1"/>
    <property type="molecule type" value="Genomic_DNA"/>
</dbReference>
<dbReference type="RefSeq" id="WP_011312065.1">
    <property type="nucleotide sequence ID" value="NC_007404.1"/>
</dbReference>
<dbReference type="SMR" id="Q3SIM2"/>
<dbReference type="STRING" id="292415.Tbd_1553"/>
<dbReference type="KEGG" id="tbd:Tbd_1553"/>
<dbReference type="eggNOG" id="COG0333">
    <property type="taxonomic scope" value="Bacteria"/>
</dbReference>
<dbReference type="HOGENOM" id="CLU_129084_2_1_4"/>
<dbReference type="OrthoDB" id="9801927at2"/>
<dbReference type="Proteomes" id="UP000008291">
    <property type="component" value="Chromosome"/>
</dbReference>
<dbReference type="GO" id="GO:0015934">
    <property type="term" value="C:large ribosomal subunit"/>
    <property type="evidence" value="ECO:0007669"/>
    <property type="project" value="InterPro"/>
</dbReference>
<dbReference type="GO" id="GO:0003735">
    <property type="term" value="F:structural constituent of ribosome"/>
    <property type="evidence" value="ECO:0007669"/>
    <property type="project" value="InterPro"/>
</dbReference>
<dbReference type="GO" id="GO:0006412">
    <property type="term" value="P:translation"/>
    <property type="evidence" value="ECO:0007669"/>
    <property type="project" value="UniProtKB-UniRule"/>
</dbReference>
<dbReference type="HAMAP" id="MF_00340">
    <property type="entry name" value="Ribosomal_bL32"/>
    <property type="match status" value="1"/>
</dbReference>
<dbReference type="InterPro" id="IPR002677">
    <property type="entry name" value="Ribosomal_bL32"/>
</dbReference>
<dbReference type="InterPro" id="IPR044957">
    <property type="entry name" value="Ribosomal_bL32_bact"/>
</dbReference>
<dbReference type="InterPro" id="IPR011332">
    <property type="entry name" value="Ribosomal_zn-bd"/>
</dbReference>
<dbReference type="NCBIfam" id="TIGR01031">
    <property type="entry name" value="rpmF_bact"/>
    <property type="match status" value="1"/>
</dbReference>
<dbReference type="PANTHER" id="PTHR35534">
    <property type="entry name" value="50S RIBOSOMAL PROTEIN L32"/>
    <property type="match status" value="1"/>
</dbReference>
<dbReference type="PANTHER" id="PTHR35534:SF1">
    <property type="entry name" value="LARGE RIBOSOMAL SUBUNIT PROTEIN BL32"/>
    <property type="match status" value="1"/>
</dbReference>
<dbReference type="Pfam" id="PF01783">
    <property type="entry name" value="Ribosomal_L32p"/>
    <property type="match status" value="1"/>
</dbReference>
<dbReference type="SUPFAM" id="SSF57829">
    <property type="entry name" value="Zn-binding ribosomal proteins"/>
    <property type="match status" value="1"/>
</dbReference>
<gene>
    <name evidence="1" type="primary">rpmF</name>
    <name type="ordered locus">Tbd_1553</name>
</gene>
<evidence type="ECO:0000255" key="1">
    <source>
        <dbReference type="HAMAP-Rule" id="MF_00340"/>
    </source>
</evidence>
<evidence type="ECO:0000256" key="2">
    <source>
        <dbReference type="SAM" id="MobiDB-lite"/>
    </source>
</evidence>
<evidence type="ECO:0000305" key="3"/>
<name>RL32_THIDA</name>
<keyword id="KW-1185">Reference proteome</keyword>
<keyword id="KW-0687">Ribonucleoprotein</keyword>
<keyword id="KW-0689">Ribosomal protein</keyword>
<organism>
    <name type="scientific">Thiobacillus denitrificans (strain ATCC 25259 / T1)</name>
    <dbReference type="NCBI Taxonomy" id="292415"/>
    <lineage>
        <taxon>Bacteria</taxon>
        <taxon>Pseudomonadati</taxon>
        <taxon>Pseudomonadota</taxon>
        <taxon>Betaproteobacteria</taxon>
        <taxon>Nitrosomonadales</taxon>
        <taxon>Thiobacillaceae</taxon>
        <taxon>Thiobacillus</taxon>
    </lineage>
</organism>
<feature type="chain" id="PRO_0000225775" description="Large ribosomal subunit protein bL32">
    <location>
        <begin position="1"/>
        <end position="59"/>
    </location>
</feature>
<feature type="region of interest" description="Disordered" evidence="2">
    <location>
        <begin position="1"/>
        <end position="22"/>
    </location>
</feature>
<comment type="similarity">
    <text evidence="1">Belongs to the bacterial ribosomal protein bL32 family.</text>
</comment>
<sequence>MAVQQNKKSPSKRGMHRSHDFLTNPALAVEPTTGEAHLRHHISPNGFYRGRKVVKAKGE</sequence>